<sequence>MDPTLTELLHANLEWIFVGGKGGVGKTTTSCALATLFATTPISDAASPGGTRPRRVLLISTDPAHNLSDAFNQRFGPHPTPVKGLEESLAAMEVDPKNFTHGALMSSLTGTKRDGSASSLPEEAAADAAQHTTTFARIGAVLKEAARTMPGIDEISVFAEILHYVRTLSYDLLIFDTAPTGHTLRLLALPQTLNSTFDKLMSLEGLAPMIEAASHLIGSNLGDLGGACGDTAGSCEQATAAPSPSSAAPGAGSAAAASPQSRWCITADEVRSTALHWRQTMEEVQARFSDPNRTSFVCVCIAEFLSVYETERLVQELMKYNIGCDSIVVNQLVLKPSSEPPCRMCSARQKIQAKYLEQIDLLYEDFHVVKMPLLSDEVRGVPALKKFARFLQEPYSPETHGYIDVQEPC</sequence>
<evidence type="ECO:0000255" key="1">
    <source>
        <dbReference type="HAMAP-Rule" id="MF_03112"/>
    </source>
</evidence>
<organism>
    <name type="scientific">Leishmania infantum</name>
    <dbReference type="NCBI Taxonomy" id="5671"/>
    <lineage>
        <taxon>Eukaryota</taxon>
        <taxon>Discoba</taxon>
        <taxon>Euglenozoa</taxon>
        <taxon>Kinetoplastea</taxon>
        <taxon>Metakinetoplastina</taxon>
        <taxon>Trypanosomatida</taxon>
        <taxon>Trypanosomatidae</taxon>
        <taxon>Leishmaniinae</taxon>
        <taxon>Leishmania</taxon>
    </lineage>
</organism>
<name>ASNA_LEIIN</name>
<protein>
    <recommendedName>
        <fullName evidence="1">ATPase ASNA1 homolog</fullName>
        <ecNumber evidence="1">3.6.-.-</ecNumber>
    </recommendedName>
    <alternativeName>
        <fullName evidence="1">Arsenical pump-driving ATPase homolog</fullName>
    </alternativeName>
    <alternativeName>
        <fullName evidence="1">Arsenite-stimulated ATPase</fullName>
    </alternativeName>
</protein>
<proteinExistence type="inferred from homology"/>
<feature type="chain" id="PRO_0000388178" description="ATPase ASNA1 homolog">
    <location>
        <begin position="1"/>
        <end position="409"/>
    </location>
</feature>
<feature type="active site" evidence="1">
    <location>
        <position position="62"/>
    </location>
</feature>
<feature type="binding site" evidence="1">
    <location>
        <begin position="21"/>
        <end position="28"/>
    </location>
    <ligand>
        <name>ATP</name>
        <dbReference type="ChEBI" id="CHEBI:30616"/>
    </ligand>
</feature>
<feature type="binding site" evidence="1">
    <location>
        <position position="303"/>
    </location>
    <ligand>
        <name>ATP</name>
        <dbReference type="ChEBI" id="CHEBI:30616"/>
    </ligand>
</feature>
<feature type="binding site" evidence="1">
    <location>
        <position position="330"/>
    </location>
    <ligand>
        <name>ATP</name>
        <dbReference type="ChEBI" id="CHEBI:30616"/>
    </ligand>
</feature>
<feature type="binding site" evidence="1">
    <location>
        <position position="342"/>
    </location>
    <ligand>
        <name>Zn(2+)</name>
        <dbReference type="ChEBI" id="CHEBI:29105"/>
        <note>ligand shared between dimeric partners</note>
    </ligand>
</feature>
<feature type="binding site" evidence="1">
    <location>
        <position position="345"/>
    </location>
    <ligand>
        <name>Zn(2+)</name>
        <dbReference type="ChEBI" id="CHEBI:29105"/>
        <note>ligand shared between dimeric partners</note>
    </ligand>
</feature>
<reference key="1">
    <citation type="journal article" date="2007" name="Nat. Genet.">
        <title>Comparative genomic analysis of three Leishmania species that cause diverse human disease.</title>
        <authorList>
            <person name="Peacock C.S."/>
            <person name="Seeger K."/>
            <person name="Harris D."/>
            <person name="Murphy L."/>
            <person name="Ruiz J.C."/>
            <person name="Quail M.A."/>
            <person name="Peters N."/>
            <person name="Adlem E."/>
            <person name="Tivey A."/>
            <person name="Aslett M."/>
            <person name="Kerhornou A."/>
            <person name="Ivens A."/>
            <person name="Fraser A."/>
            <person name="Rajandream M.-A."/>
            <person name="Carver T."/>
            <person name="Norbertczak H."/>
            <person name="Chillingworth T."/>
            <person name="Hance Z."/>
            <person name="Jagels K."/>
            <person name="Moule S."/>
            <person name="Ormond D."/>
            <person name="Rutter S."/>
            <person name="Sqaures R."/>
            <person name="Whitehead S."/>
            <person name="Rabbinowitsch E."/>
            <person name="Arrowsmith C."/>
            <person name="White B."/>
            <person name="Thurston S."/>
            <person name="Bringaud F."/>
            <person name="Baldauf S.L."/>
            <person name="Faulconbridge A."/>
            <person name="Jeffares D."/>
            <person name="Depledge D.P."/>
            <person name="Oyola S.O."/>
            <person name="Hilley J.D."/>
            <person name="Brito L.O."/>
            <person name="Tosi L.R.O."/>
            <person name="Barrell B."/>
            <person name="Cruz A.K."/>
            <person name="Mottram J.C."/>
            <person name="Smith D.F."/>
            <person name="Berriman M."/>
        </authorList>
    </citation>
    <scope>NUCLEOTIDE SEQUENCE [LARGE SCALE GENOMIC DNA]</scope>
    <source>
        <strain>JPCM5</strain>
    </source>
</reference>
<keyword id="KW-0067">ATP-binding</keyword>
<keyword id="KW-0963">Cytoplasm</keyword>
<keyword id="KW-0256">Endoplasmic reticulum</keyword>
<keyword id="KW-0378">Hydrolase</keyword>
<keyword id="KW-0479">Metal-binding</keyword>
<keyword id="KW-0547">Nucleotide-binding</keyword>
<keyword id="KW-1185">Reference proteome</keyword>
<keyword id="KW-0813">Transport</keyword>
<keyword id="KW-0862">Zinc</keyword>
<accession>A4HUY0</accession>
<gene>
    <name type="ORF">LinJ11.0710</name>
    <name type="ORF">LinJ_11_0710</name>
</gene>
<comment type="function">
    <text evidence="1">ATPase required for the post-translational delivery of tail-anchored (TA) proteins to the endoplasmic reticulum. Recognizes and selectively binds the transmembrane domain of TA proteins in the cytosol. This complex then targets to the endoplasmic reticulum by membrane-bound receptors, where the tail-anchored protein is released for insertion. This process is regulated by ATP binding and hydrolysis. ATP binding drives the homodimer towards the closed dimer state, facilitating recognition of newly synthesized TA membrane proteins. ATP hydrolysis is required for insertion. Subsequently, the homodimer reverts towards the open dimer state, lowering its affinity for the membrane-bound receptor, and returning it to the cytosol to initiate a new round of targeting.</text>
</comment>
<comment type="subunit">
    <text evidence="1">Homodimer.</text>
</comment>
<comment type="subcellular location">
    <subcellularLocation>
        <location evidence="1">Cytoplasm</location>
    </subcellularLocation>
    <subcellularLocation>
        <location evidence="1">Endoplasmic reticulum</location>
    </subcellularLocation>
</comment>
<comment type="similarity">
    <text evidence="1">Belongs to the arsA ATPase family.</text>
</comment>
<dbReference type="EC" id="3.6.-.-" evidence="1"/>
<dbReference type="EMBL" id="FR796443">
    <property type="protein sequence ID" value="CAM66243.1"/>
    <property type="molecule type" value="Genomic_DNA"/>
</dbReference>
<dbReference type="RefSeq" id="XP_001463871.1">
    <property type="nucleotide sequence ID" value="XM_001463834.1"/>
</dbReference>
<dbReference type="SMR" id="A4HUY0"/>
<dbReference type="FunCoup" id="A4HUY0">
    <property type="interactions" value="418"/>
</dbReference>
<dbReference type="STRING" id="5671.A4HUY0"/>
<dbReference type="GeneID" id="5067249"/>
<dbReference type="KEGG" id="lif:LINJ_11_0710"/>
<dbReference type="VEuPathDB" id="TriTrypDB:LINF_110012700"/>
<dbReference type="eggNOG" id="KOG2825">
    <property type="taxonomic scope" value="Eukaryota"/>
</dbReference>
<dbReference type="InParanoid" id="A4HUY0"/>
<dbReference type="OMA" id="MDAPYEF"/>
<dbReference type="Proteomes" id="UP000008153">
    <property type="component" value="Chromosome 11"/>
</dbReference>
<dbReference type="GO" id="GO:0043529">
    <property type="term" value="C:GET complex"/>
    <property type="evidence" value="ECO:0007669"/>
    <property type="project" value="TreeGrafter"/>
</dbReference>
<dbReference type="GO" id="GO:0005524">
    <property type="term" value="F:ATP binding"/>
    <property type="evidence" value="ECO:0007669"/>
    <property type="project" value="UniProtKB-UniRule"/>
</dbReference>
<dbReference type="GO" id="GO:0016887">
    <property type="term" value="F:ATP hydrolysis activity"/>
    <property type="evidence" value="ECO:0007669"/>
    <property type="project" value="InterPro"/>
</dbReference>
<dbReference type="GO" id="GO:0046872">
    <property type="term" value="F:metal ion binding"/>
    <property type="evidence" value="ECO:0007669"/>
    <property type="project" value="UniProtKB-KW"/>
</dbReference>
<dbReference type="GO" id="GO:0071816">
    <property type="term" value="P:tail-anchored membrane protein insertion into ER membrane"/>
    <property type="evidence" value="ECO:0007669"/>
    <property type="project" value="TreeGrafter"/>
</dbReference>
<dbReference type="CDD" id="cd02035">
    <property type="entry name" value="ArsA"/>
    <property type="match status" value="1"/>
</dbReference>
<dbReference type="Gene3D" id="3.40.50.300">
    <property type="entry name" value="P-loop containing nucleotide triphosphate hydrolases"/>
    <property type="match status" value="1"/>
</dbReference>
<dbReference type="HAMAP" id="MF_03112">
    <property type="entry name" value="Asna1_Get3"/>
    <property type="match status" value="1"/>
</dbReference>
<dbReference type="InterPro" id="IPR025723">
    <property type="entry name" value="Anion-transp_ATPase-like_dom"/>
</dbReference>
<dbReference type="InterPro" id="IPR016300">
    <property type="entry name" value="ATPase_ArsA/GET3"/>
</dbReference>
<dbReference type="InterPro" id="IPR027542">
    <property type="entry name" value="ATPase_ArsA/GET3_euk"/>
</dbReference>
<dbReference type="InterPro" id="IPR027417">
    <property type="entry name" value="P-loop_NTPase"/>
</dbReference>
<dbReference type="NCBIfam" id="TIGR00345">
    <property type="entry name" value="GET3_arsA_TRC40"/>
    <property type="match status" value="1"/>
</dbReference>
<dbReference type="PANTHER" id="PTHR10803">
    <property type="entry name" value="ARSENICAL PUMP-DRIVING ATPASE ARSENITE-TRANSLOCATING ATPASE"/>
    <property type="match status" value="1"/>
</dbReference>
<dbReference type="PANTHER" id="PTHR10803:SF3">
    <property type="entry name" value="ATPASE GET3"/>
    <property type="match status" value="1"/>
</dbReference>
<dbReference type="Pfam" id="PF02374">
    <property type="entry name" value="ArsA_ATPase"/>
    <property type="match status" value="2"/>
</dbReference>
<dbReference type="SUPFAM" id="SSF52540">
    <property type="entry name" value="P-loop containing nucleoside triphosphate hydrolases"/>
    <property type="match status" value="1"/>
</dbReference>